<comment type="function">
    <text evidence="1">Acts as a chaperone.</text>
</comment>
<comment type="induction">
    <text evidence="1">By stress conditions e.g. heat shock.</text>
</comment>
<comment type="similarity">
    <text evidence="1">Belongs to the heat shock protein 70 family.</text>
</comment>
<keyword id="KW-0067">ATP-binding</keyword>
<keyword id="KW-0143">Chaperone</keyword>
<keyword id="KW-0547">Nucleotide-binding</keyword>
<keyword id="KW-0597">Phosphoprotein</keyword>
<keyword id="KW-0346">Stress response</keyword>
<reference key="1">
    <citation type="journal article" date="2006" name="Lancet">
        <title>Complete genome sequence of USA300, an epidemic clone of community-acquired meticillin-resistant Staphylococcus aureus.</title>
        <authorList>
            <person name="Diep B.A."/>
            <person name="Gill S.R."/>
            <person name="Chang R.F."/>
            <person name="Phan T.H."/>
            <person name="Chen J.H."/>
            <person name="Davidson M.G."/>
            <person name="Lin F."/>
            <person name="Lin J."/>
            <person name="Carleton H.A."/>
            <person name="Mongodin E.F."/>
            <person name="Sensabaugh G.F."/>
            <person name="Perdreau-Remington F."/>
        </authorList>
    </citation>
    <scope>NUCLEOTIDE SEQUENCE [LARGE SCALE GENOMIC DNA]</scope>
    <source>
        <strain>USA300</strain>
    </source>
</reference>
<proteinExistence type="inferred from homology"/>
<dbReference type="EMBL" id="CP000255">
    <property type="protein sequence ID" value="ABD22105.1"/>
    <property type="molecule type" value="Genomic_DNA"/>
</dbReference>
<dbReference type="RefSeq" id="WP_000034716.1">
    <property type="nucleotide sequence ID" value="NZ_CP027476.1"/>
</dbReference>
<dbReference type="SMR" id="Q2FGE3"/>
<dbReference type="KEGG" id="saa:SAUSA300_1540"/>
<dbReference type="HOGENOM" id="CLU_005965_2_4_9"/>
<dbReference type="OMA" id="MGTDWKI"/>
<dbReference type="Proteomes" id="UP000001939">
    <property type="component" value="Chromosome"/>
</dbReference>
<dbReference type="GO" id="GO:0005524">
    <property type="term" value="F:ATP binding"/>
    <property type="evidence" value="ECO:0007669"/>
    <property type="project" value="UniProtKB-UniRule"/>
</dbReference>
<dbReference type="GO" id="GO:0140662">
    <property type="term" value="F:ATP-dependent protein folding chaperone"/>
    <property type="evidence" value="ECO:0007669"/>
    <property type="project" value="InterPro"/>
</dbReference>
<dbReference type="GO" id="GO:0051082">
    <property type="term" value="F:unfolded protein binding"/>
    <property type="evidence" value="ECO:0007669"/>
    <property type="project" value="InterPro"/>
</dbReference>
<dbReference type="CDD" id="cd10234">
    <property type="entry name" value="ASKHA_NBD_HSP70_DnaK-like"/>
    <property type="match status" value="1"/>
</dbReference>
<dbReference type="FunFam" id="2.60.34.10:FF:000014">
    <property type="entry name" value="Chaperone protein DnaK HSP70"/>
    <property type="match status" value="1"/>
</dbReference>
<dbReference type="FunFam" id="1.20.1270.10:FF:000001">
    <property type="entry name" value="Molecular chaperone DnaK"/>
    <property type="match status" value="1"/>
</dbReference>
<dbReference type="FunFam" id="3.30.420.40:FF:000071">
    <property type="entry name" value="Molecular chaperone DnaK"/>
    <property type="match status" value="1"/>
</dbReference>
<dbReference type="FunFam" id="3.90.640.10:FF:000003">
    <property type="entry name" value="Molecular chaperone DnaK"/>
    <property type="match status" value="1"/>
</dbReference>
<dbReference type="Gene3D" id="1.20.1270.10">
    <property type="match status" value="1"/>
</dbReference>
<dbReference type="Gene3D" id="3.30.420.40">
    <property type="match status" value="2"/>
</dbReference>
<dbReference type="Gene3D" id="3.90.640.10">
    <property type="entry name" value="Actin, Chain A, domain 4"/>
    <property type="match status" value="1"/>
</dbReference>
<dbReference type="Gene3D" id="2.60.34.10">
    <property type="entry name" value="Substrate Binding Domain Of DNAk, Chain A, domain 1"/>
    <property type="match status" value="1"/>
</dbReference>
<dbReference type="HAMAP" id="MF_00332">
    <property type="entry name" value="DnaK"/>
    <property type="match status" value="1"/>
</dbReference>
<dbReference type="InterPro" id="IPR043129">
    <property type="entry name" value="ATPase_NBD"/>
</dbReference>
<dbReference type="InterPro" id="IPR012725">
    <property type="entry name" value="Chaperone_DnaK"/>
</dbReference>
<dbReference type="InterPro" id="IPR018181">
    <property type="entry name" value="Heat_shock_70_CS"/>
</dbReference>
<dbReference type="InterPro" id="IPR029048">
    <property type="entry name" value="HSP70_C_sf"/>
</dbReference>
<dbReference type="InterPro" id="IPR029047">
    <property type="entry name" value="HSP70_peptide-bd_sf"/>
</dbReference>
<dbReference type="InterPro" id="IPR013126">
    <property type="entry name" value="Hsp_70_fam"/>
</dbReference>
<dbReference type="NCBIfam" id="NF001413">
    <property type="entry name" value="PRK00290.1"/>
    <property type="match status" value="1"/>
</dbReference>
<dbReference type="NCBIfam" id="TIGR02350">
    <property type="entry name" value="prok_dnaK"/>
    <property type="match status" value="1"/>
</dbReference>
<dbReference type="PANTHER" id="PTHR19375">
    <property type="entry name" value="HEAT SHOCK PROTEIN 70KDA"/>
    <property type="match status" value="1"/>
</dbReference>
<dbReference type="Pfam" id="PF00012">
    <property type="entry name" value="HSP70"/>
    <property type="match status" value="1"/>
</dbReference>
<dbReference type="PRINTS" id="PR00301">
    <property type="entry name" value="HEATSHOCK70"/>
</dbReference>
<dbReference type="SUPFAM" id="SSF53067">
    <property type="entry name" value="Actin-like ATPase domain"/>
    <property type="match status" value="2"/>
</dbReference>
<dbReference type="SUPFAM" id="SSF100934">
    <property type="entry name" value="Heat shock protein 70kD (HSP70), C-terminal subdomain"/>
    <property type="match status" value="1"/>
</dbReference>
<dbReference type="SUPFAM" id="SSF100920">
    <property type="entry name" value="Heat shock protein 70kD (HSP70), peptide-binding domain"/>
    <property type="match status" value="1"/>
</dbReference>
<dbReference type="PROSITE" id="PS00297">
    <property type="entry name" value="HSP70_1"/>
    <property type="match status" value="1"/>
</dbReference>
<dbReference type="PROSITE" id="PS00329">
    <property type="entry name" value="HSP70_2"/>
    <property type="match status" value="1"/>
</dbReference>
<dbReference type="PROSITE" id="PS01036">
    <property type="entry name" value="HSP70_3"/>
    <property type="match status" value="1"/>
</dbReference>
<accession>Q2FGE3</accession>
<feature type="chain" id="PRO_1000059676" description="Chaperone protein DnaK">
    <location>
        <begin position="1"/>
        <end position="610"/>
    </location>
</feature>
<feature type="region of interest" description="Disordered" evidence="2">
    <location>
        <begin position="525"/>
        <end position="544"/>
    </location>
</feature>
<feature type="region of interest" description="Disordered" evidence="2">
    <location>
        <begin position="576"/>
        <end position="610"/>
    </location>
</feature>
<feature type="compositionally biased region" description="Basic and acidic residues" evidence="2">
    <location>
        <begin position="529"/>
        <end position="542"/>
    </location>
</feature>
<feature type="compositionally biased region" description="Low complexity" evidence="2">
    <location>
        <begin position="576"/>
        <end position="592"/>
    </location>
</feature>
<feature type="compositionally biased region" description="Basic and acidic residues" evidence="2">
    <location>
        <begin position="599"/>
        <end position="610"/>
    </location>
</feature>
<feature type="modified residue" description="Phosphothreonine; by autocatalysis" evidence="1">
    <location>
        <position position="173"/>
    </location>
</feature>
<sequence length="610" mass="66361">MSKIIGIDLGTTNSCVTVLEGDEPKVIQNPEGSRTTPSVVAFKNGETQVGEVAKRQAITNPNTVQSIKRHMGTDYKVDIEGKSYTPQEISAMILQNLKNTAESYLGEKVDKAVITVPAYFNDAERQATKDAGKIAGLEVERIINEPTAAALAYGLDKTDKDEKVLVFDLGGGTFDVSILELGDGVFEVLSTAGDNKLGGDDFDQVIIDYLVAEFKKENGVDLSQDKMALQRLKDAAEKAKKDLSGVSQTQISLPFISAGENGPLHLEVNLTRSKFEELSDSLIRRTMEPTRQAMKDAGLTNSDIDEVILVGGSTRIPAVQEAVKKEIGKEPNKGVNPDEVVAMGAAIQGGVITGDVKDVVLLDVTPLSLGIEILGGRMNTLIERNTTIPTSKSQIYSTAVDNQPSVDVHVLQGERPMAADNKTLGRFQLTDIPPAERGKPQIEVTFDIDKNGIVNVTAKDLGTNKEQRITIQSSSSLSDEEIDRMVKDAEVNAEADKKRREEVDLRNEADSLVFQVEKTLTDLGENIGEEDKKSAEEKKDALKTALEGQDIEDIKSKKEELEKVIQELSAKVYEQAAQQQQQAQGANAGQNNDSTVEDAEFKEVKDDDKK</sequence>
<evidence type="ECO:0000255" key="1">
    <source>
        <dbReference type="HAMAP-Rule" id="MF_00332"/>
    </source>
</evidence>
<evidence type="ECO:0000256" key="2">
    <source>
        <dbReference type="SAM" id="MobiDB-lite"/>
    </source>
</evidence>
<protein>
    <recommendedName>
        <fullName evidence="1">Chaperone protein DnaK</fullName>
    </recommendedName>
    <alternativeName>
        <fullName evidence="1">HSP70</fullName>
    </alternativeName>
    <alternativeName>
        <fullName evidence="1">Heat shock 70 kDa protein</fullName>
    </alternativeName>
    <alternativeName>
        <fullName evidence="1">Heat shock protein 70</fullName>
    </alternativeName>
</protein>
<name>DNAK_STAA3</name>
<gene>
    <name evidence="1" type="primary">dnaK</name>
    <name type="ordered locus">SAUSA300_1540</name>
</gene>
<organism>
    <name type="scientific">Staphylococcus aureus (strain USA300)</name>
    <dbReference type="NCBI Taxonomy" id="367830"/>
    <lineage>
        <taxon>Bacteria</taxon>
        <taxon>Bacillati</taxon>
        <taxon>Bacillota</taxon>
        <taxon>Bacilli</taxon>
        <taxon>Bacillales</taxon>
        <taxon>Staphylococcaceae</taxon>
        <taxon>Staphylococcus</taxon>
    </lineage>
</organism>